<feature type="chain" id="PRO_1000004207" description="Large ribosomal subunit protein bL33">
    <location>
        <begin position="1"/>
        <end position="54"/>
    </location>
</feature>
<feature type="turn" evidence="5">
    <location>
        <begin position="6"/>
        <end position="8"/>
    </location>
</feature>
<feature type="strand" evidence="6">
    <location>
        <begin position="10"/>
        <end position="12"/>
    </location>
</feature>
<feature type="strand" evidence="3">
    <location>
        <begin position="16"/>
        <end position="18"/>
    </location>
</feature>
<feature type="strand" evidence="6">
    <location>
        <begin position="23"/>
        <end position="25"/>
    </location>
</feature>
<feature type="turn" evidence="4">
    <location>
        <begin position="28"/>
        <end position="31"/>
    </location>
</feature>
<feature type="strand" evidence="4">
    <location>
        <begin position="42"/>
        <end position="45"/>
    </location>
</feature>
<feature type="strand" evidence="4">
    <location>
        <begin position="47"/>
        <end position="50"/>
    </location>
</feature>
<keyword id="KW-0002">3D-structure</keyword>
<keyword id="KW-0687">Ribonucleoprotein</keyword>
<keyword id="KW-0689">Ribosomal protein</keyword>
<accession>Q72GW3</accession>
<protein>
    <recommendedName>
        <fullName evidence="1">Large ribosomal subunit protein bL33</fullName>
    </recommendedName>
    <alternativeName>
        <fullName evidence="2">50S ribosomal protein L33</fullName>
    </alternativeName>
</protein>
<sequence length="54" mass="6616">MASEVRIKLLLECTECKRRNYATEKNKRNTPNKLELRKYCPWCRKHTVHREVKI</sequence>
<gene>
    <name evidence="1" type="primary">rpmG</name>
    <name type="ordered locus">TT_C1735</name>
</gene>
<name>RL33_THET2</name>
<proteinExistence type="evidence at protein level"/>
<evidence type="ECO:0000255" key="1">
    <source>
        <dbReference type="HAMAP-Rule" id="MF_00294"/>
    </source>
</evidence>
<evidence type="ECO:0000305" key="2"/>
<evidence type="ECO:0007829" key="3">
    <source>
        <dbReference type="PDB" id="4V63"/>
    </source>
</evidence>
<evidence type="ECO:0007829" key="4">
    <source>
        <dbReference type="PDB" id="4V67"/>
    </source>
</evidence>
<evidence type="ECO:0007829" key="5">
    <source>
        <dbReference type="PDB" id="4V9L"/>
    </source>
</evidence>
<evidence type="ECO:0007829" key="6">
    <source>
        <dbReference type="PDB" id="4V9N"/>
    </source>
</evidence>
<reference key="1">
    <citation type="journal article" date="2004" name="Nat. Biotechnol.">
        <title>The genome sequence of the extreme thermophile Thermus thermophilus.</title>
        <authorList>
            <person name="Henne A."/>
            <person name="Brueggemann H."/>
            <person name="Raasch C."/>
            <person name="Wiezer A."/>
            <person name="Hartsch T."/>
            <person name="Liesegang H."/>
            <person name="Johann A."/>
            <person name="Lienard T."/>
            <person name="Gohl O."/>
            <person name="Martinez-Arias R."/>
            <person name="Jacobi C."/>
            <person name="Starkuviene V."/>
            <person name="Schlenczeck S."/>
            <person name="Dencker S."/>
            <person name="Huber R."/>
            <person name="Klenk H.-P."/>
            <person name="Kramer W."/>
            <person name="Merkl R."/>
            <person name="Gottschalk G."/>
            <person name="Fritz H.-J."/>
        </authorList>
    </citation>
    <scope>NUCLEOTIDE SEQUENCE [LARGE SCALE GENOMIC DNA]</scope>
    <source>
        <strain>ATCC BAA-163 / DSM 7039 / HB27</strain>
    </source>
</reference>
<comment type="similarity">
    <text evidence="1">Belongs to the bacterial ribosomal protein bL33 family.</text>
</comment>
<dbReference type="EMBL" id="AE017221">
    <property type="protein sequence ID" value="AAS82077.1"/>
    <property type="molecule type" value="Genomic_DNA"/>
</dbReference>
<dbReference type="RefSeq" id="WP_008630505.1">
    <property type="nucleotide sequence ID" value="NC_005835.1"/>
</dbReference>
<dbReference type="PDB" id="4V63">
    <property type="method" value="X-ray"/>
    <property type="resolution" value="3.21 A"/>
    <property type="chains" value="B6/D6=1-54"/>
</dbReference>
<dbReference type="PDB" id="4V67">
    <property type="method" value="X-ray"/>
    <property type="resolution" value="3.00 A"/>
    <property type="chains" value="B6/D6=1-54"/>
</dbReference>
<dbReference type="PDB" id="4V7P">
    <property type="method" value="X-ray"/>
    <property type="resolution" value="3.62 A"/>
    <property type="chains" value="B3/C3=1-54"/>
</dbReference>
<dbReference type="PDB" id="4V83">
    <property type="method" value="X-ray"/>
    <property type="resolution" value="3.50 A"/>
    <property type="chains" value="B3/D3=9-52"/>
</dbReference>
<dbReference type="PDB" id="4V84">
    <property type="method" value="X-ray"/>
    <property type="resolution" value="3.40 A"/>
    <property type="chains" value="B3/D3=9-52"/>
</dbReference>
<dbReference type="PDB" id="4V9J">
    <property type="method" value="X-ray"/>
    <property type="resolution" value="3.86 A"/>
    <property type="chains" value="B6/D6=5-54"/>
</dbReference>
<dbReference type="PDB" id="4V9K">
    <property type="method" value="X-ray"/>
    <property type="resolution" value="3.50 A"/>
    <property type="chains" value="B6/D6=5-54"/>
</dbReference>
<dbReference type="PDB" id="4V9L">
    <property type="method" value="X-ray"/>
    <property type="resolution" value="3.50 A"/>
    <property type="chains" value="B6/D6=5-54"/>
</dbReference>
<dbReference type="PDB" id="4V9M">
    <property type="method" value="X-ray"/>
    <property type="resolution" value="4.00 A"/>
    <property type="chains" value="B6/D6=5-54"/>
</dbReference>
<dbReference type="PDB" id="4V9N">
    <property type="method" value="X-ray"/>
    <property type="resolution" value="3.40 A"/>
    <property type="chains" value="B6/D6=9-52"/>
</dbReference>
<dbReference type="PDB" id="4V9Q">
    <property type="method" value="X-ray"/>
    <property type="resolution" value="3.40 A"/>
    <property type="chains" value="A3/C3=9-52"/>
</dbReference>
<dbReference type="PDB" id="4W29">
    <property type="method" value="X-ray"/>
    <property type="resolution" value="3.80 A"/>
    <property type="chains" value="B6/D6=5-54"/>
</dbReference>
<dbReference type="PDB" id="4XEJ">
    <property type="method" value="X-ray"/>
    <property type="resolution" value="3.80 A"/>
    <property type="chains" value="AL33/BL33=9-52"/>
</dbReference>
<dbReference type="PDB" id="5J4D">
    <property type="method" value="X-ray"/>
    <property type="resolution" value="3.10 A"/>
    <property type="chains" value="DA/IC=1-54"/>
</dbReference>
<dbReference type="PDB" id="5V8I">
    <property type="method" value="X-ray"/>
    <property type="resolution" value="3.25 A"/>
    <property type="chains" value="16/26=1-54"/>
</dbReference>
<dbReference type="PDB" id="6B4V">
    <property type="method" value="X-ray"/>
    <property type="resolution" value="3.40 A"/>
    <property type="chains" value="DA/HC=1-54"/>
</dbReference>
<dbReference type="PDB" id="6BOH">
    <property type="method" value="X-ray"/>
    <property type="resolution" value="3.40 A"/>
    <property type="chains" value="DA/IC=1-54"/>
</dbReference>
<dbReference type="PDB" id="6BOK">
    <property type="method" value="X-ray"/>
    <property type="resolution" value="3.55 A"/>
    <property type="chains" value="DA/GC=1-54"/>
</dbReference>
<dbReference type="PDB" id="6N1D">
    <property type="method" value="X-ray"/>
    <property type="resolution" value="3.20 A"/>
    <property type="chains" value="AL33/BL33=1-54"/>
</dbReference>
<dbReference type="PDBsum" id="4V63"/>
<dbReference type="PDBsum" id="4V67"/>
<dbReference type="PDBsum" id="4V7P"/>
<dbReference type="PDBsum" id="4V83"/>
<dbReference type="PDBsum" id="4V84"/>
<dbReference type="PDBsum" id="4V9J"/>
<dbReference type="PDBsum" id="4V9K"/>
<dbReference type="PDBsum" id="4V9L"/>
<dbReference type="PDBsum" id="4V9M"/>
<dbReference type="PDBsum" id="4V9N"/>
<dbReference type="PDBsum" id="4V9Q"/>
<dbReference type="PDBsum" id="4W29"/>
<dbReference type="PDBsum" id="4XEJ"/>
<dbReference type="PDBsum" id="5J4D"/>
<dbReference type="PDBsum" id="5V8I"/>
<dbReference type="PDBsum" id="6B4V"/>
<dbReference type="PDBsum" id="6BOH"/>
<dbReference type="PDBsum" id="6BOK"/>
<dbReference type="PDBsum" id="6N1D"/>
<dbReference type="SMR" id="Q72GW3"/>
<dbReference type="IntAct" id="Q72GW3">
    <property type="interactions" value="4"/>
</dbReference>
<dbReference type="GeneID" id="3167958"/>
<dbReference type="KEGG" id="tth:TT_C1735"/>
<dbReference type="eggNOG" id="COG0267">
    <property type="taxonomic scope" value="Bacteria"/>
</dbReference>
<dbReference type="HOGENOM" id="CLU_190949_0_2_0"/>
<dbReference type="OrthoDB" id="9801333at2"/>
<dbReference type="Proteomes" id="UP000000592">
    <property type="component" value="Chromosome"/>
</dbReference>
<dbReference type="GO" id="GO:0005737">
    <property type="term" value="C:cytoplasm"/>
    <property type="evidence" value="ECO:0007669"/>
    <property type="project" value="UniProtKB-ARBA"/>
</dbReference>
<dbReference type="GO" id="GO:1990904">
    <property type="term" value="C:ribonucleoprotein complex"/>
    <property type="evidence" value="ECO:0007669"/>
    <property type="project" value="UniProtKB-KW"/>
</dbReference>
<dbReference type="GO" id="GO:0005840">
    <property type="term" value="C:ribosome"/>
    <property type="evidence" value="ECO:0007669"/>
    <property type="project" value="UniProtKB-KW"/>
</dbReference>
<dbReference type="GO" id="GO:0003735">
    <property type="term" value="F:structural constituent of ribosome"/>
    <property type="evidence" value="ECO:0007669"/>
    <property type="project" value="InterPro"/>
</dbReference>
<dbReference type="GO" id="GO:0006412">
    <property type="term" value="P:translation"/>
    <property type="evidence" value="ECO:0007669"/>
    <property type="project" value="UniProtKB-UniRule"/>
</dbReference>
<dbReference type="Gene3D" id="2.20.28.120">
    <property type="entry name" value="Ribosomal protein L33"/>
    <property type="match status" value="1"/>
</dbReference>
<dbReference type="HAMAP" id="MF_00294">
    <property type="entry name" value="Ribosomal_bL33"/>
    <property type="match status" value="1"/>
</dbReference>
<dbReference type="InterPro" id="IPR001705">
    <property type="entry name" value="Ribosomal_bL33"/>
</dbReference>
<dbReference type="InterPro" id="IPR018264">
    <property type="entry name" value="Ribosomal_bL33_CS"/>
</dbReference>
<dbReference type="InterPro" id="IPR038584">
    <property type="entry name" value="Ribosomal_bL33_sf"/>
</dbReference>
<dbReference type="InterPro" id="IPR011332">
    <property type="entry name" value="Ribosomal_zn-bd"/>
</dbReference>
<dbReference type="NCBIfam" id="NF001764">
    <property type="entry name" value="PRK00504.1"/>
    <property type="match status" value="1"/>
</dbReference>
<dbReference type="NCBIfam" id="NF001860">
    <property type="entry name" value="PRK00595.1"/>
    <property type="match status" value="1"/>
</dbReference>
<dbReference type="NCBIfam" id="TIGR01023">
    <property type="entry name" value="rpmG_bact"/>
    <property type="match status" value="1"/>
</dbReference>
<dbReference type="PANTHER" id="PTHR43168">
    <property type="entry name" value="50S RIBOSOMAL PROTEIN L33, CHLOROPLASTIC"/>
    <property type="match status" value="1"/>
</dbReference>
<dbReference type="PANTHER" id="PTHR43168:SF2">
    <property type="entry name" value="LARGE RIBOSOMAL SUBUNIT PROTEIN BL33C"/>
    <property type="match status" value="1"/>
</dbReference>
<dbReference type="Pfam" id="PF00471">
    <property type="entry name" value="Ribosomal_L33"/>
    <property type="match status" value="1"/>
</dbReference>
<dbReference type="SUPFAM" id="SSF57829">
    <property type="entry name" value="Zn-binding ribosomal proteins"/>
    <property type="match status" value="1"/>
</dbReference>
<dbReference type="PROSITE" id="PS00582">
    <property type="entry name" value="RIBOSOMAL_L33"/>
    <property type="match status" value="1"/>
</dbReference>
<organism>
    <name type="scientific">Thermus thermophilus (strain ATCC BAA-163 / DSM 7039 / HB27)</name>
    <dbReference type="NCBI Taxonomy" id="262724"/>
    <lineage>
        <taxon>Bacteria</taxon>
        <taxon>Thermotogati</taxon>
        <taxon>Deinococcota</taxon>
        <taxon>Deinococci</taxon>
        <taxon>Thermales</taxon>
        <taxon>Thermaceae</taxon>
        <taxon>Thermus</taxon>
    </lineage>
</organism>